<keyword id="KW-1003">Cell membrane</keyword>
<keyword id="KW-0449">Lipoprotein</keyword>
<keyword id="KW-0472">Membrane</keyword>
<keyword id="KW-0564">Palmitate</keyword>
<keyword id="KW-0677">Repeat</keyword>
<keyword id="KW-0732">Signal</keyword>
<sequence length="243" mass="24340">MKKSIFSKKLLVSFGSLVTLAAIPLIAISCGQTTDNLSQSQQPGSGTGSGSGTNTENGSNNGSGSGTTNSSGGTNQSGSASGNGSSNSSVSTPDGQHSNPSNPTTSDPKESNPSNPTTSDPKESNPSNPTTSDGQHSNPSNPTTSDPKESNPSNPTTSDGQHSNPSNPTTSDGQHSNPSNPTTSDGQHSNPSNPTTSDGQHSNPSNPTTSDGQHSNPSNPTTSDGQHSNPSNPTTSDGQNQNK</sequence>
<evidence type="ECO:0000256" key="1">
    <source>
        <dbReference type="SAM" id="MobiDB-lite"/>
    </source>
</evidence>
<evidence type="ECO:0000305" key="2"/>
<evidence type="ECO:0000305" key="3">
    <source>
    </source>
</evidence>
<comment type="function">
    <text evidence="3">Responsible for the antigenic diversity for host adaptation. Expression in E.coli of a construct containing vlpD, vlpE, and vlpF yields antigenically distinguishable products corresponding to each gene.</text>
</comment>
<comment type="subcellular location">
    <subcellularLocation>
        <location evidence="2">Cell membrane</location>
        <topology evidence="2">Lipid-anchor</topology>
    </subcellularLocation>
</comment>
<comment type="miscellaneous">
    <text>The numbers of repeats can vary and is one of the basis of the antigenic diversity.</text>
</comment>
<name>VLPE_MESHY</name>
<organism>
    <name type="scientific">Mesomycoplasma hyorhinis</name>
    <name type="common">Mycoplasma hyorhinis</name>
    <dbReference type="NCBI Taxonomy" id="2100"/>
    <lineage>
        <taxon>Bacteria</taxon>
        <taxon>Bacillati</taxon>
        <taxon>Mycoplasmatota</taxon>
        <taxon>Mycoplasmoidales</taxon>
        <taxon>Metamycoplasmataceae</taxon>
        <taxon>Mesomycoplasma</taxon>
    </lineage>
</organism>
<accession>Q49537</accession>
<reference key="1">
    <citation type="journal article" date="1995" name="J. Bacteriol.">
        <title>Increased structural and combinatorial diversity in an extended family of genes encoding Vlp surface proteins of Mycoplasma hyorhinis.</title>
        <authorList>
            <person name="Yogev D."/>
            <person name="Watson-Mckown R."/>
            <person name="Rosengarten R."/>
            <person name="Im J."/>
            <person name="Wise K.S."/>
        </authorList>
    </citation>
    <scope>NUCLEOTIDE SEQUENCE [GENOMIC DNA]</scope>
    <scope>POSSIBLE EXPRESSION</scope>
    <source>
        <strain>GDL-1</strain>
    </source>
</reference>
<dbReference type="EMBL" id="U35016">
    <property type="protein sequence ID" value="AAC45471.1"/>
    <property type="molecule type" value="Genomic_DNA"/>
</dbReference>
<dbReference type="GO" id="GO:0005886">
    <property type="term" value="C:plasma membrane"/>
    <property type="evidence" value="ECO:0007669"/>
    <property type="project" value="UniProtKB-SubCell"/>
</dbReference>
<dbReference type="InterPro" id="IPR049890">
    <property type="entry name" value="VlpA-F-like_signal"/>
</dbReference>
<dbReference type="NCBIfam" id="NF033817">
    <property type="entry name" value="Mplas_variab_LP"/>
    <property type="match status" value="1"/>
</dbReference>
<dbReference type="PROSITE" id="PS51257">
    <property type="entry name" value="PROKAR_LIPOPROTEIN"/>
    <property type="match status" value="1"/>
</dbReference>
<protein>
    <recommendedName>
        <fullName>Variant surface antigen E</fullName>
    </recommendedName>
    <alternativeName>
        <fullName>VlpE prolipoprotein</fullName>
    </alternativeName>
</protein>
<gene>
    <name type="primary">vlpE</name>
</gene>
<feature type="signal peptide" evidence="2">
    <location>
        <begin position="1"/>
        <end position="29"/>
    </location>
</feature>
<feature type="chain" id="PRO_0000018217" description="Variant surface antigen E">
    <location>
        <begin position="30"/>
        <end position="243"/>
    </location>
</feature>
<feature type="repeat" description="1">
    <location>
        <begin position="97"/>
        <end position="109"/>
    </location>
</feature>
<feature type="repeat" description="2">
    <location>
        <begin position="110"/>
        <end position="122"/>
    </location>
</feature>
<feature type="repeat" description="3">
    <location>
        <begin position="123"/>
        <end position="135"/>
    </location>
</feature>
<feature type="repeat" description="4">
    <location>
        <begin position="136"/>
        <end position="148"/>
    </location>
</feature>
<feature type="repeat" description="5">
    <location>
        <begin position="149"/>
        <end position="161"/>
    </location>
</feature>
<feature type="repeat" description="6">
    <location>
        <begin position="162"/>
        <end position="174"/>
    </location>
</feature>
<feature type="repeat" description="7">
    <location>
        <begin position="175"/>
        <end position="187"/>
    </location>
</feature>
<feature type="repeat" description="8">
    <location>
        <begin position="188"/>
        <end position="200"/>
    </location>
</feature>
<feature type="repeat" description="9">
    <location>
        <begin position="201"/>
        <end position="213"/>
    </location>
</feature>
<feature type="repeat" description="10">
    <location>
        <begin position="214"/>
        <end position="226"/>
    </location>
</feature>
<feature type="repeat" description="11">
    <location>
        <begin position="227"/>
        <end position="239"/>
    </location>
</feature>
<feature type="region of interest" description="Disordered" evidence="1">
    <location>
        <begin position="34"/>
        <end position="243"/>
    </location>
</feature>
<feature type="region of interest" description="11 X 13 AA tandem repeats">
    <location>
        <begin position="97"/>
        <end position="239"/>
    </location>
</feature>
<feature type="compositionally biased region" description="Low complexity" evidence="1">
    <location>
        <begin position="52"/>
        <end position="92"/>
    </location>
</feature>
<feature type="compositionally biased region" description="Polar residues" evidence="1">
    <location>
        <begin position="93"/>
        <end position="243"/>
    </location>
</feature>
<feature type="lipid moiety-binding region" description="N-palmitoyl cysteine" evidence="2">
    <location>
        <position position="30"/>
    </location>
</feature>
<feature type="lipid moiety-binding region" description="S-diacylglycerol cysteine" evidence="2">
    <location>
        <position position="30"/>
    </location>
</feature>
<proteinExistence type="predicted"/>